<gene>
    <name type="primary">EME1</name>
    <name type="ordered locus">Os04g0648700</name>
    <name type="ordered locus">LOC_Os04g55500</name>
    <name type="ORF">OsJ_16416</name>
    <name type="ORF">OSJNBa0010D21.8</name>
</gene>
<evidence type="ECO:0000250" key="1"/>
<evidence type="ECO:0000255" key="2"/>
<evidence type="ECO:0000256" key="3">
    <source>
        <dbReference type="SAM" id="MobiDB-lite"/>
    </source>
</evidence>
<evidence type="ECO:0000305" key="4"/>
<keyword id="KW-0106">Calcium</keyword>
<keyword id="KW-0131">Cell cycle</keyword>
<keyword id="KW-0132">Cell division</keyword>
<keyword id="KW-0175">Coiled coil</keyword>
<keyword id="KW-0227">DNA damage</keyword>
<keyword id="KW-0233">DNA recombination</keyword>
<keyword id="KW-0234">DNA repair</keyword>
<keyword id="KW-0255">Endonuclease</keyword>
<keyword id="KW-0378">Hydrolase</keyword>
<keyword id="KW-0460">Magnesium</keyword>
<keyword id="KW-0469">Meiosis</keyword>
<keyword id="KW-0479">Metal-binding</keyword>
<keyword id="KW-0498">Mitosis</keyword>
<keyword id="KW-0540">Nuclease</keyword>
<keyword id="KW-0539">Nucleus</keyword>
<keyword id="KW-1185">Reference proteome</keyword>
<organism>
    <name type="scientific">Oryza sativa subsp. japonica</name>
    <name type="common">Rice</name>
    <dbReference type="NCBI Taxonomy" id="39947"/>
    <lineage>
        <taxon>Eukaryota</taxon>
        <taxon>Viridiplantae</taxon>
        <taxon>Streptophyta</taxon>
        <taxon>Embryophyta</taxon>
        <taxon>Tracheophyta</taxon>
        <taxon>Spermatophyta</taxon>
        <taxon>Magnoliopsida</taxon>
        <taxon>Liliopsida</taxon>
        <taxon>Poales</taxon>
        <taxon>Poaceae</taxon>
        <taxon>BOP clade</taxon>
        <taxon>Oryzoideae</taxon>
        <taxon>Oryzeae</taxon>
        <taxon>Oryzinae</taxon>
        <taxon>Oryza</taxon>
        <taxon>Oryza sativa</taxon>
    </lineage>
</organism>
<protein>
    <recommendedName>
        <fullName>Crossover junction endonuclease EME1</fullName>
        <ecNumber>3.1.22.-</ecNumber>
    </recommendedName>
    <alternativeName>
        <fullName>Essential meiotic endonuclease 1</fullName>
        <shortName>OsEME1</shortName>
    </alternativeName>
</protein>
<name>EME1_ORYSJ</name>
<comment type="function">
    <text evidence="1">Interacts with MUS81 to form a DNA structure-specific endonuclease with substrate preference for branched DNA structures with a 5'-end at the branch nick. Typical substrates include 3'-flap structures, D-loops, replication forks, nicked Holliday junctions and also intact Holliday junctions with a reduced efficiency. May be required in mitosis for the processing of stalled or collapsed replication fork intermediates. Plays a role in DNA repair and in genotoxic stress-induced homologous recombination (HR) in somatic cells. Mediates a subset of meiotic recombination events that are insensitive to crossover interference (By similarity).</text>
</comment>
<comment type="cofactor">
    <cofactor evidence="1">
        <name>Mg(2+)</name>
        <dbReference type="ChEBI" id="CHEBI:18420"/>
    </cofactor>
    <cofactor evidence="1">
        <name>Ca(2+)</name>
        <dbReference type="ChEBI" id="CHEBI:29108"/>
    </cofactor>
</comment>
<comment type="subunit">
    <text evidence="1">Forms a heterodimer with MUS81.</text>
</comment>
<comment type="subcellular location">
    <subcellularLocation>
        <location evidence="1">Nucleus</location>
    </subcellularLocation>
</comment>
<comment type="similarity">
    <text evidence="4">Belongs to the EME1/MMS4 family.</text>
</comment>
<comment type="sequence caution" evidence="4">
    <conflict type="erroneous gene model prediction">
        <sequence resource="EMBL-CDS" id="CAE01666"/>
    </conflict>
</comment>
<feature type="chain" id="PRO_0000418429" description="Crossover junction endonuclease EME1">
    <location>
        <begin position="1"/>
        <end position="650"/>
    </location>
</feature>
<feature type="domain" description="ERCC4">
    <location>
        <begin position="391"/>
        <end position="592"/>
    </location>
</feature>
<feature type="region of interest" description="Disordered" evidence="3">
    <location>
        <begin position="1"/>
        <end position="94"/>
    </location>
</feature>
<feature type="region of interest" description="Disordered" evidence="3">
    <location>
        <begin position="107"/>
        <end position="168"/>
    </location>
</feature>
<feature type="region of interest" description="Disordered" evidence="3">
    <location>
        <begin position="220"/>
        <end position="326"/>
    </location>
</feature>
<feature type="coiled-coil region" evidence="2">
    <location>
        <begin position="291"/>
        <end position="355"/>
    </location>
</feature>
<feature type="compositionally biased region" description="Acidic residues" evidence="3">
    <location>
        <begin position="10"/>
        <end position="21"/>
    </location>
</feature>
<feature type="compositionally biased region" description="Low complexity" evidence="3">
    <location>
        <begin position="36"/>
        <end position="49"/>
    </location>
</feature>
<feature type="compositionally biased region" description="Low complexity" evidence="3">
    <location>
        <begin position="82"/>
        <end position="92"/>
    </location>
</feature>
<feature type="compositionally biased region" description="Basic and acidic residues" evidence="3">
    <location>
        <begin position="221"/>
        <end position="235"/>
    </location>
</feature>
<feature type="compositionally biased region" description="Polar residues" evidence="3">
    <location>
        <begin position="238"/>
        <end position="261"/>
    </location>
</feature>
<feature type="compositionally biased region" description="Basic and acidic residues" evidence="3">
    <location>
        <begin position="291"/>
        <end position="326"/>
    </location>
</feature>
<reference key="1">
    <citation type="journal article" date="2002" name="Nature">
        <title>Sequence and analysis of rice chromosome 4.</title>
        <authorList>
            <person name="Feng Q."/>
            <person name="Zhang Y."/>
            <person name="Hao P."/>
            <person name="Wang S."/>
            <person name="Fu G."/>
            <person name="Huang Y."/>
            <person name="Li Y."/>
            <person name="Zhu J."/>
            <person name="Liu Y."/>
            <person name="Hu X."/>
            <person name="Jia P."/>
            <person name="Zhang Y."/>
            <person name="Zhao Q."/>
            <person name="Ying K."/>
            <person name="Yu S."/>
            <person name="Tang Y."/>
            <person name="Weng Q."/>
            <person name="Zhang L."/>
            <person name="Lu Y."/>
            <person name="Mu J."/>
            <person name="Lu Y."/>
            <person name="Zhang L.S."/>
            <person name="Yu Z."/>
            <person name="Fan D."/>
            <person name="Liu X."/>
            <person name="Lu T."/>
            <person name="Li C."/>
            <person name="Wu Y."/>
            <person name="Sun T."/>
            <person name="Lei H."/>
            <person name="Li T."/>
            <person name="Hu H."/>
            <person name="Guan J."/>
            <person name="Wu M."/>
            <person name="Zhang R."/>
            <person name="Zhou B."/>
            <person name="Chen Z."/>
            <person name="Chen L."/>
            <person name="Jin Z."/>
            <person name="Wang R."/>
            <person name="Yin H."/>
            <person name="Cai Z."/>
            <person name="Ren S."/>
            <person name="Lv G."/>
            <person name="Gu W."/>
            <person name="Zhu G."/>
            <person name="Tu Y."/>
            <person name="Jia J."/>
            <person name="Zhang Y."/>
            <person name="Chen J."/>
            <person name="Kang H."/>
            <person name="Chen X."/>
            <person name="Shao C."/>
            <person name="Sun Y."/>
            <person name="Hu Q."/>
            <person name="Zhang X."/>
            <person name="Zhang W."/>
            <person name="Wang L."/>
            <person name="Ding C."/>
            <person name="Sheng H."/>
            <person name="Gu J."/>
            <person name="Chen S."/>
            <person name="Ni L."/>
            <person name="Zhu F."/>
            <person name="Chen W."/>
            <person name="Lan L."/>
            <person name="Lai Y."/>
            <person name="Cheng Z."/>
            <person name="Gu M."/>
            <person name="Jiang J."/>
            <person name="Li J."/>
            <person name="Hong G."/>
            <person name="Xue Y."/>
            <person name="Han B."/>
        </authorList>
    </citation>
    <scope>NUCLEOTIDE SEQUENCE [LARGE SCALE GENOMIC DNA]</scope>
    <source>
        <strain>cv. Nipponbare</strain>
    </source>
</reference>
<reference key="2">
    <citation type="journal article" date="2005" name="Nature">
        <title>The map-based sequence of the rice genome.</title>
        <authorList>
            <consortium name="International rice genome sequencing project (IRGSP)"/>
        </authorList>
    </citation>
    <scope>NUCLEOTIDE SEQUENCE [LARGE SCALE GENOMIC DNA]</scope>
    <source>
        <strain>cv. Nipponbare</strain>
    </source>
</reference>
<reference key="3">
    <citation type="journal article" date="2008" name="Nucleic Acids Res.">
        <title>The rice annotation project database (RAP-DB): 2008 update.</title>
        <authorList>
            <consortium name="The rice annotation project (RAP)"/>
        </authorList>
    </citation>
    <scope>GENOME REANNOTATION</scope>
    <source>
        <strain>cv. Nipponbare</strain>
    </source>
</reference>
<reference key="4">
    <citation type="journal article" date="2013" name="Rice">
        <title>Improvement of the Oryza sativa Nipponbare reference genome using next generation sequence and optical map data.</title>
        <authorList>
            <person name="Kawahara Y."/>
            <person name="de la Bastide M."/>
            <person name="Hamilton J.P."/>
            <person name="Kanamori H."/>
            <person name="McCombie W.R."/>
            <person name="Ouyang S."/>
            <person name="Schwartz D.C."/>
            <person name="Tanaka T."/>
            <person name="Wu J."/>
            <person name="Zhou S."/>
            <person name="Childs K.L."/>
            <person name="Davidson R.M."/>
            <person name="Lin H."/>
            <person name="Quesada-Ocampo L."/>
            <person name="Vaillancourt B."/>
            <person name="Sakai H."/>
            <person name="Lee S.S."/>
            <person name="Kim J."/>
            <person name="Numa H."/>
            <person name="Itoh T."/>
            <person name="Buell C.R."/>
            <person name="Matsumoto T."/>
        </authorList>
    </citation>
    <scope>GENOME REANNOTATION</scope>
    <source>
        <strain>cv. Nipponbare</strain>
    </source>
</reference>
<reference key="5">
    <citation type="journal article" date="2005" name="PLoS Biol.">
        <title>The genomes of Oryza sativa: a history of duplications.</title>
        <authorList>
            <person name="Yu J."/>
            <person name="Wang J."/>
            <person name="Lin W."/>
            <person name="Li S."/>
            <person name="Li H."/>
            <person name="Zhou J."/>
            <person name="Ni P."/>
            <person name="Dong W."/>
            <person name="Hu S."/>
            <person name="Zeng C."/>
            <person name="Zhang J."/>
            <person name="Zhang Y."/>
            <person name="Li R."/>
            <person name="Xu Z."/>
            <person name="Li S."/>
            <person name="Li X."/>
            <person name="Zheng H."/>
            <person name="Cong L."/>
            <person name="Lin L."/>
            <person name="Yin J."/>
            <person name="Geng J."/>
            <person name="Li G."/>
            <person name="Shi J."/>
            <person name="Liu J."/>
            <person name="Lv H."/>
            <person name="Li J."/>
            <person name="Wang J."/>
            <person name="Deng Y."/>
            <person name="Ran L."/>
            <person name="Shi X."/>
            <person name="Wang X."/>
            <person name="Wu Q."/>
            <person name="Li C."/>
            <person name="Ren X."/>
            <person name="Wang J."/>
            <person name="Wang X."/>
            <person name="Li D."/>
            <person name="Liu D."/>
            <person name="Zhang X."/>
            <person name="Ji Z."/>
            <person name="Zhao W."/>
            <person name="Sun Y."/>
            <person name="Zhang Z."/>
            <person name="Bao J."/>
            <person name="Han Y."/>
            <person name="Dong L."/>
            <person name="Ji J."/>
            <person name="Chen P."/>
            <person name="Wu S."/>
            <person name="Liu J."/>
            <person name="Xiao Y."/>
            <person name="Bu D."/>
            <person name="Tan J."/>
            <person name="Yang L."/>
            <person name="Ye C."/>
            <person name="Zhang J."/>
            <person name="Xu J."/>
            <person name="Zhou Y."/>
            <person name="Yu Y."/>
            <person name="Zhang B."/>
            <person name="Zhuang S."/>
            <person name="Wei H."/>
            <person name="Liu B."/>
            <person name="Lei M."/>
            <person name="Yu H."/>
            <person name="Li Y."/>
            <person name="Xu H."/>
            <person name="Wei S."/>
            <person name="He X."/>
            <person name="Fang L."/>
            <person name="Zhang Z."/>
            <person name="Zhang Y."/>
            <person name="Huang X."/>
            <person name="Su Z."/>
            <person name="Tong W."/>
            <person name="Li J."/>
            <person name="Tong Z."/>
            <person name="Li S."/>
            <person name="Ye J."/>
            <person name="Wang L."/>
            <person name="Fang L."/>
            <person name="Lei T."/>
            <person name="Chen C.-S."/>
            <person name="Chen H.-C."/>
            <person name="Xu Z."/>
            <person name="Li H."/>
            <person name="Huang H."/>
            <person name="Zhang F."/>
            <person name="Xu H."/>
            <person name="Li N."/>
            <person name="Zhao C."/>
            <person name="Li S."/>
            <person name="Dong L."/>
            <person name="Huang Y."/>
            <person name="Li L."/>
            <person name="Xi Y."/>
            <person name="Qi Q."/>
            <person name="Li W."/>
            <person name="Zhang B."/>
            <person name="Hu W."/>
            <person name="Zhang Y."/>
            <person name="Tian X."/>
            <person name="Jiao Y."/>
            <person name="Liang X."/>
            <person name="Jin J."/>
            <person name="Gao L."/>
            <person name="Zheng W."/>
            <person name="Hao B."/>
            <person name="Liu S.-M."/>
            <person name="Wang W."/>
            <person name="Yuan L."/>
            <person name="Cao M."/>
            <person name="McDermott J."/>
            <person name="Samudrala R."/>
            <person name="Wang J."/>
            <person name="Wong G.K.-S."/>
            <person name="Yang H."/>
        </authorList>
    </citation>
    <scope>NUCLEOTIDE SEQUENCE [LARGE SCALE GENOMIC DNA]</scope>
    <source>
        <strain>cv. Nipponbare</strain>
    </source>
</reference>
<reference key="6">
    <citation type="journal article" date="2003" name="Science">
        <title>Collection, mapping, and annotation of over 28,000 cDNA clones from japonica rice.</title>
        <authorList>
            <consortium name="The rice full-length cDNA consortium"/>
        </authorList>
    </citation>
    <scope>NUCLEOTIDE SEQUENCE [LARGE SCALE MRNA]</scope>
    <source>
        <strain>cv. Nipponbare</strain>
    </source>
</reference>
<dbReference type="EC" id="3.1.22.-"/>
<dbReference type="EMBL" id="AL606635">
    <property type="protein sequence ID" value="CAE01666.2"/>
    <property type="status" value="ALT_SEQ"/>
    <property type="molecule type" value="Genomic_DNA"/>
</dbReference>
<dbReference type="EMBL" id="AP008210">
    <property type="protein sequence ID" value="BAF15991.1"/>
    <property type="molecule type" value="Genomic_DNA"/>
</dbReference>
<dbReference type="EMBL" id="AP014960">
    <property type="protein sequence ID" value="BAS91328.1"/>
    <property type="molecule type" value="Genomic_DNA"/>
</dbReference>
<dbReference type="EMBL" id="CM000141">
    <property type="protein sequence ID" value="EEE61803.1"/>
    <property type="molecule type" value="Genomic_DNA"/>
</dbReference>
<dbReference type="EMBL" id="AK066786">
    <property type="protein sequence ID" value="BAG90127.1"/>
    <property type="molecule type" value="mRNA"/>
</dbReference>
<dbReference type="RefSeq" id="XP_015637261.1">
    <property type="nucleotide sequence ID" value="XM_015781775.1"/>
</dbReference>
<dbReference type="SMR" id="Q0J9J6"/>
<dbReference type="FunCoup" id="Q0J9J6">
    <property type="interactions" value="34"/>
</dbReference>
<dbReference type="iPTMnet" id="Q0J9J6"/>
<dbReference type="PaxDb" id="39947-Q0J9J6"/>
<dbReference type="EnsemblPlants" id="Os04t0648700-01">
    <property type="protein sequence ID" value="Os04t0648700-01"/>
    <property type="gene ID" value="Os04g0648700"/>
</dbReference>
<dbReference type="Gramene" id="Os04t0648700-01">
    <property type="protein sequence ID" value="Os04t0648700-01"/>
    <property type="gene ID" value="Os04g0648700"/>
</dbReference>
<dbReference type="KEGG" id="dosa:Os04g0648700"/>
<dbReference type="eggNOG" id="ENOG502QV6A">
    <property type="taxonomic scope" value="Eukaryota"/>
</dbReference>
<dbReference type="HOGENOM" id="CLU_022160_0_0_1"/>
<dbReference type="InParanoid" id="Q0J9J6"/>
<dbReference type="OMA" id="HAIQPCT"/>
<dbReference type="OrthoDB" id="343092at2759"/>
<dbReference type="Proteomes" id="UP000000763">
    <property type="component" value="Chromosome 4"/>
</dbReference>
<dbReference type="Proteomes" id="UP000007752">
    <property type="component" value="Chromosome 4"/>
</dbReference>
<dbReference type="Proteomes" id="UP000059680">
    <property type="component" value="Chromosome 4"/>
</dbReference>
<dbReference type="GO" id="GO:0048476">
    <property type="term" value="C:Holliday junction resolvase complex"/>
    <property type="evidence" value="ECO:0007669"/>
    <property type="project" value="InterPro"/>
</dbReference>
<dbReference type="GO" id="GO:0005634">
    <property type="term" value="C:nucleus"/>
    <property type="evidence" value="ECO:0007669"/>
    <property type="project" value="UniProtKB-SubCell"/>
</dbReference>
<dbReference type="GO" id="GO:0003677">
    <property type="term" value="F:DNA binding"/>
    <property type="evidence" value="ECO:0007669"/>
    <property type="project" value="InterPro"/>
</dbReference>
<dbReference type="GO" id="GO:0004519">
    <property type="term" value="F:endonuclease activity"/>
    <property type="evidence" value="ECO:0007669"/>
    <property type="project" value="UniProtKB-KW"/>
</dbReference>
<dbReference type="GO" id="GO:0046872">
    <property type="term" value="F:metal ion binding"/>
    <property type="evidence" value="ECO:0007669"/>
    <property type="project" value="UniProtKB-KW"/>
</dbReference>
<dbReference type="GO" id="GO:0051301">
    <property type="term" value="P:cell division"/>
    <property type="evidence" value="ECO:0007669"/>
    <property type="project" value="UniProtKB-KW"/>
</dbReference>
<dbReference type="GO" id="GO:0006310">
    <property type="term" value="P:DNA recombination"/>
    <property type="evidence" value="ECO:0007669"/>
    <property type="project" value="UniProtKB-KW"/>
</dbReference>
<dbReference type="GO" id="GO:0006281">
    <property type="term" value="P:DNA repair"/>
    <property type="evidence" value="ECO:0007669"/>
    <property type="project" value="UniProtKB-KW"/>
</dbReference>
<dbReference type="GO" id="GO:0051321">
    <property type="term" value="P:meiotic cell cycle"/>
    <property type="evidence" value="ECO:0007669"/>
    <property type="project" value="UniProtKB-KW"/>
</dbReference>
<dbReference type="GO" id="GO:0010332">
    <property type="term" value="P:response to gamma radiation"/>
    <property type="evidence" value="ECO:0000270"/>
    <property type="project" value="UniProtKB"/>
</dbReference>
<dbReference type="GO" id="GO:0009644">
    <property type="term" value="P:response to high light intensity"/>
    <property type="evidence" value="ECO:0000270"/>
    <property type="project" value="UniProtKB"/>
</dbReference>
<dbReference type="GO" id="GO:0009411">
    <property type="term" value="P:response to UV"/>
    <property type="evidence" value="ECO:0000270"/>
    <property type="project" value="UniProtKB"/>
</dbReference>
<dbReference type="CDD" id="cd20083">
    <property type="entry name" value="XPF_nuclease_EME"/>
    <property type="match status" value="1"/>
</dbReference>
<dbReference type="FunFam" id="3.40.50.10130:FF:000013">
    <property type="entry name" value="Crossover junction endonuclease EME1"/>
    <property type="match status" value="1"/>
</dbReference>
<dbReference type="FunFam" id="1.10.150.670:FF:000007">
    <property type="entry name" value="Crossover junction endonuclease EME1B"/>
    <property type="match status" value="1"/>
</dbReference>
<dbReference type="Gene3D" id="3.40.50.10130">
    <property type="match status" value="1"/>
</dbReference>
<dbReference type="Gene3D" id="1.10.150.670">
    <property type="entry name" value="Crossover junction endonuclease EME1, DNA-binding domain"/>
    <property type="match status" value="1"/>
</dbReference>
<dbReference type="InterPro" id="IPR042530">
    <property type="entry name" value="EME1/EME2_C"/>
</dbReference>
<dbReference type="InterPro" id="IPR006166">
    <property type="entry name" value="ERCC4_domain"/>
</dbReference>
<dbReference type="InterPro" id="IPR033310">
    <property type="entry name" value="Mms4/EME1/EME2"/>
</dbReference>
<dbReference type="InterPro" id="IPR047524">
    <property type="entry name" value="XPF_nuclease_EME1_plant/arthr"/>
</dbReference>
<dbReference type="PANTHER" id="PTHR21077:SF5">
    <property type="entry name" value="CROSSOVER JUNCTION ENDONUCLEASE MMS4"/>
    <property type="match status" value="1"/>
</dbReference>
<dbReference type="PANTHER" id="PTHR21077">
    <property type="entry name" value="EME1 PROTEIN"/>
    <property type="match status" value="1"/>
</dbReference>
<dbReference type="Pfam" id="PF21292">
    <property type="entry name" value="EME1-MUS81_C"/>
    <property type="match status" value="1"/>
</dbReference>
<dbReference type="Pfam" id="PF02732">
    <property type="entry name" value="ERCC4"/>
    <property type="match status" value="1"/>
</dbReference>
<accession>Q0J9J6</accession>
<accession>A0A0P0WFK5</accession>
<accession>Q7XT54</accession>
<proteinExistence type="evidence at transcript level"/>
<sequence>MASHAAVVEIIDDDDDDDDDVAAASTPPALHKRSHAVAAAAPDSPDAFSPSPPDPKRRQLAASTIVLDDTPTPPKRRPPPVAADRSASVVADTPRSFVPCSLRNRAIAGDTPDSVLPSPSFHLDAPDSATPGSDVPCSVGLDDIVPETPGFNSPRLARPPAVPGLTSPMTARKFSGVSCPISLDSDDELDDTVYRESLTRTPSNMAKPEHAIQPCTTSCTDKVENTKSTDKKDYSKSNVGYQTNNSACKNNGTTSYNQPPRANSPCEDSTLKEADPFINNHCPQEENALPIEERKKKQQEEKRLKKEKKAREIEEKKQKRLETKKQKEAMKAELAELKKLEKEKKKWESGKLATKCIVAEIDSSVIESGSVGGHLVQGFHEKGLCFRVTSNSIKGSILWKMQIPNEFTQDQASTSQVPYILFVLQAEEFCDLVSGGTLLDHVQKVRRQYPEFTICYVTNKLMSFIKRREQNQYNKTTSNSNSWKRPPVEEALCKLATHYARVRSRHCTDEAEVTEHIVGLTYSLANCKFRKPLTWLSVHANGSNISKGCVDKDRIKKSAWLKSLVAIPGVSPGQAIAIEKKYPSMRSLLNVYMDDSKSVHEKEHLLEDLRLEGPLGDFKRRLGPACSKKVYTILMAQNGAAEVEVDRRGA</sequence>